<feature type="chain" id="PRO_1000050164" description="4-hydroxy-tetrahydrodipicolinate synthase">
    <location>
        <begin position="1"/>
        <end position="289"/>
    </location>
</feature>
<feature type="active site" description="Proton donor/acceptor" evidence="1">
    <location>
        <position position="134"/>
    </location>
</feature>
<feature type="active site" description="Schiff-base intermediate with substrate" evidence="1">
    <location>
        <position position="162"/>
    </location>
</feature>
<feature type="binding site" evidence="1">
    <location>
        <position position="46"/>
    </location>
    <ligand>
        <name>pyruvate</name>
        <dbReference type="ChEBI" id="CHEBI:15361"/>
    </ligand>
</feature>
<feature type="binding site" evidence="1">
    <location>
        <position position="204"/>
    </location>
    <ligand>
        <name>pyruvate</name>
        <dbReference type="ChEBI" id="CHEBI:15361"/>
    </ligand>
</feature>
<feature type="site" description="Part of a proton relay during catalysis" evidence="1">
    <location>
        <position position="45"/>
    </location>
</feature>
<feature type="site" description="Part of a proton relay during catalysis" evidence="1">
    <location>
        <position position="108"/>
    </location>
</feature>
<protein>
    <recommendedName>
        <fullName evidence="1">4-hydroxy-tetrahydrodipicolinate synthase</fullName>
        <shortName evidence="1">HTPA synthase</shortName>
        <ecNumber evidence="1">4.3.3.7</ecNumber>
    </recommendedName>
</protein>
<keyword id="KW-0028">Amino-acid biosynthesis</keyword>
<keyword id="KW-0963">Cytoplasm</keyword>
<keyword id="KW-0220">Diaminopimelate biosynthesis</keyword>
<keyword id="KW-0456">Lyase</keyword>
<keyword id="KW-0457">Lysine biosynthesis</keyword>
<keyword id="KW-0704">Schiff base</keyword>
<evidence type="ECO:0000255" key="1">
    <source>
        <dbReference type="HAMAP-Rule" id="MF_00418"/>
    </source>
</evidence>
<evidence type="ECO:0000305" key="2"/>
<comment type="function">
    <text evidence="1">Catalyzes the condensation of (S)-aspartate-beta-semialdehyde [(S)-ASA] and pyruvate to 4-hydroxy-tetrahydrodipicolinate (HTPA).</text>
</comment>
<comment type="catalytic activity">
    <reaction evidence="1">
        <text>L-aspartate 4-semialdehyde + pyruvate = (2S,4S)-4-hydroxy-2,3,4,5-tetrahydrodipicolinate + H2O + H(+)</text>
        <dbReference type="Rhea" id="RHEA:34171"/>
        <dbReference type="ChEBI" id="CHEBI:15361"/>
        <dbReference type="ChEBI" id="CHEBI:15377"/>
        <dbReference type="ChEBI" id="CHEBI:15378"/>
        <dbReference type="ChEBI" id="CHEBI:67139"/>
        <dbReference type="ChEBI" id="CHEBI:537519"/>
        <dbReference type="EC" id="4.3.3.7"/>
    </reaction>
</comment>
<comment type="pathway">
    <text evidence="1">Amino-acid biosynthesis; L-lysine biosynthesis via DAP pathway; (S)-tetrahydrodipicolinate from L-aspartate: step 3/4.</text>
</comment>
<comment type="subunit">
    <text evidence="1">Homotetramer; dimer of dimers.</text>
</comment>
<comment type="subcellular location">
    <subcellularLocation>
        <location evidence="1">Cytoplasm</location>
    </subcellularLocation>
</comment>
<comment type="similarity">
    <text evidence="1">Belongs to the DapA family.</text>
</comment>
<comment type="caution">
    <text evidence="2">Was originally thought to be a dihydrodipicolinate synthase (DHDPS), catalyzing the condensation of (S)-aspartate-beta-semialdehyde [(S)-ASA] and pyruvate to dihydrodipicolinate (DHDP). However, it was shown in E.coli that the product of the enzymatic reaction is not dihydrodipicolinate but in fact (4S)-4-hydroxy-2,3,4,5-tetrahydro-(2S)-dipicolinic acid (HTPA), and that the consecutive dehydration reaction leading to DHDP is not spontaneous but catalyzed by DapB.</text>
</comment>
<sequence>MNVGNISTAMITPFDSKGNVDFQKLSTLIDYLLKNGTDSLVVAGTTGESPTLSTEEKIALFEFTVKEVNGRVPVIAGTGSNNTKDSIKLTKKAEEAGVDCVMLVTPYYNKPSQEGMYRHFKAIAEETSLPVMLYNVPGRTVASLAPETAIRLAEIPNISAIKEASGDLDAITKIIAETPEDFYVYSGDDGLTLPILAVGGRGVVSVASHIVGSDMQQMIKNYTNGQTATAALIHQKLLPIMKELFKAPNPAPVKTALQLKGLDVGSVRLPLIPLNEDERLSLSSVISEL</sequence>
<proteinExistence type="inferred from homology"/>
<organism>
    <name type="scientific">Bacillus velezensis (strain DSM 23117 / BGSC 10A6 / LMG 26770 / FZB42)</name>
    <name type="common">Bacillus amyloliquefaciens subsp. plantarum</name>
    <dbReference type="NCBI Taxonomy" id="326423"/>
    <lineage>
        <taxon>Bacteria</taxon>
        <taxon>Bacillati</taxon>
        <taxon>Bacillota</taxon>
        <taxon>Bacilli</taxon>
        <taxon>Bacillales</taxon>
        <taxon>Bacillaceae</taxon>
        <taxon>Bacillus</taxon>
        <taxon>Bacillus amyloliquefaciens group</taxon>
    </lineage>
</organism>
<name>DAPA_BACVZ</name>
<accession>A7Z4U8</accession>
<reference key="1">
    <citation type="journal article" date="2007" name="Nat. Biotechnol.">
        <title>Comparative analysis of the complete genome sequence of the plant growth-promoting bacterium Bacillus amyloliquefaciens FZB42.</title>
        <authorList>
            <person name="Chen X.H."/>
            <person name="Koumoutsi A."/>
            <person name="Scholz R."/>
            <person name="Eisenreich A."/>
            <person name="Schneider K."/>
            <person name="Heinemeyer I."/>
            <person name="Morgenstern B."/>
            <person name="Voss B."/>
            <person name="Hess W.R."/>
            <person name="Reva O."/>
            <person name="Junge H."/>
            <person name="Voigt B."/>
            <person name="Jungblut P.R."/>
            <person name="Vater J."/>
            <person name="Suessmuth R."/>
            <person name="Liesegang H."/>
            <person name="Strittmatter A."/>
            <person name="Gottschalk G."/>
            <person name="Borriss R."/>
        </authorList>
    </citation>
    <scope>NUCLEOTIDE SEQUENCE [LARGE SCALE GENOMIC DNA]</scope>
    <source>
        <strain>DSM 23117 / BGSC 10A6 / LMG 26770 / FZB42</strain>
    </source>
</reference>
<gene>
    <name evidence="1" type="primary">dapA</name>
    <name type="ordered locus">RBAM_016610</name>
</gene>
<dbReference type="EC" id="4.3.3.7" evidence="1"/>
<dbReference type="EMBL" id="CP000560">
    <property type="protein sequence ID" value="ABS74024.1"/>
    <property type="molecule type" value="Genomic_DNA"/>
</dbReference>
<dbReference type="RefSeq" id="WP_003154166.1">
    <property type="nucleotide sequence ID" value="NC_009725.2"/>
</dbReference>
<dbReference type="SMR" id="A7Z4U8"/>
<dbReference type="GeneID" id="93080794"/>
<dbReference type="KEGG" id="bay:RBAM_016610"/>
<dbReference type="HOGENOM" id="CLU_049343_7_1_9"/>
<dbReference type="UniPathway" id="UPA00034">
    <property type="reaction ID" value="UER00017"/>
</dbReference>
<dbReference type="Proteomes" id="UP000001120">
    <property type="component" value="Chromosome"/>
</dbReference>
<dbReference type="GO" id="GO:0005829">
    <property type="term" value="C:cytosol"/>
    <property type="evidence" value="ECO:0007669"/>
    <property type="project" value="TreeGrafter"/>
</dbReference>
<dbReference type="GO" id="GO:0008840">
    <property type="term" value="F:4-hydroxy-tetrahydrodipicolinate synthase activity"/>
    <property type="evidence" value="ECO:0007669"/>
    <property type="project" value="UniProtKB-UniRule"/>
</dbReference>
<dbReference type="GO" id="GO:0019877">
    <property type="term" value="P:diaminopimelate biosynthetic process"/>
    <property type="evidence" value="ECO:0007669"/>
    <property type="project" value="UniProtKB-UniRule"/>
</dbReference>
<dbReference type="GO" id="GO:0009089">
    <property type="term" value="P:lysine biosynthetic process via diaminopimelate"/>
    <property type="evidence" value="ECO:0007669"/>
    <property type="project" value="UniProtKB-UniRule"/>
</dbReference>
<dbReference type="CDD" id="cd00950">
    <property type="entry name" value="DHDPS"/>
    <property type="match status" value="1"/>
</dbReference>
<dbReference type="Gene3D" id="3.20.20.70">
    <property type="entry name" value="Aldolase class I"/>
    <property type="match status" value="1"/>
</dbReference>
<dbReference type="HAMAP" id="MF_00418">
    <property type="entry name" value="DapA"/>
    <property type="match status" value="1"/>
</dbReference>
<dbReference type="InterPro" id="IPR013785">
    <property type="entry name" value="Aldolase_TIM"/>
</dbReference>
<dbReference type="InterPro" id="IPR005263">
    <property type="entry name" value="DapA"/>
</dbReference>
<dbReference type="InterPro" id="IPR002220">
    <property type="entry name" value="DapA-like"/>
</dbReference>
<dbReference type="InterPro" id="IPR020625">
    <property type="entry name" value="Schiff_base-form_aldolases_AS"/>
</dbReference>
<dbReference type="InterPro" id="IPR020624">
    <property type="entry name" value="Schiff_base-form_aldolases_CS"/>
</dbReference>
<dbReference type="NCBIfam" id="TIGR00674">
    <property type="entry name" value="dapA"/>
    <property type="match status" value="1"/>
</dbReference>
<dbReference type="PANTHER" id="PTHR12128:SF66">
    <property type="entry name" value="4-HYDROXY-2-OXOGLUTARATE ALDOLASE, MITOCHONDRIAL"/>
    <property type="match status" value="1"/>
</dbReference>
<dbReference type="PANTHER" id="PTHR12128">
    <property type="entry name" value="DIHYDRODIPICOLINATE SYNTHASE"/>
    <property type="match status" value="1"/>
</dbReference>
<dbReference type="Pfam" id="PF00701">
    <property type="entry name" value="DHDPS"/>
    <property type="match status" value="1"/>
</dbReference>
<dbReference type="PIRSF" id="PIRSF001365">
    <property type="entry name" value="DHDPS"/>
    <property type="match status" value="1"/>
</dbReference>
<dbReference type="PRINTS" id="PR00146">
    <property type="entry name" value="DHPICSNTHASE"/>
</dbReference>
<dbReference type="SMART" id="SM01130">
    <property type="entry name" value="DHDPS"/>
    <property type="match status" value="1"/>
</dbReference>
<dbReference type="SUPFAM" id="SSF51569">
    <property type="entry name" value="Aldolase"/>
    <property type="match status" value="1"/>
</dbReference>
<dbReference type="PROSITE" id="PS00665">
    <property type="entry name" value="DHDPS_1"/>
    <property type="match status" value="1"/>
</dbReference>
<dbReference type="PROSITE" id="PS00666">
    <property type="entry name" value="DHDPS_2"/>
    <property type="match status" value="1"/>
</dbReference>